<accession>Q0TNU6</accession>
<proteinExistence type="inferred from homology"/>
<keyword id="KW-0227">DNA damage</keyword>
<keyword id="KW-0233">DNA recombination</keyword>
<keyword id="KW-0234">DNA repair</keyword>
<reference key="1">
    <citation type="journal article" date="2006" name="Genome Res.">
        <title>Skewed genomic variability in strains of the toxigenic bacterial pathogen, Clostridium perfringens.</title>
        <authorList>
            <person name="Myers G.S.A."/>
            <person name="Rasko D.A."/>
            <person name="Cheung J.K."/>
            <person name="Ravel J."/>
            <person name="Seshadri R."/>
            <person name="DeBoy R.T."/>
            <person name="Ren Q."/>
            <person name="Varga J."/>
            <person name="Awad M.M."/>
            <person name="Brinkac L.M."/>
            <person name="Daugherty S.C."/>
            <person name="Haft D.H."/>
            <person name="Dodson R.J."/>
            <person name="Madupu R."/>
            <person name="Nelson W.C."/>
            <person name="Rosovitz M.J."/>
            <person name="Sullivan S.A."/>
            <person name="Khouri H."/>
            <person name="Dimitrov G.I."/>
            <person name="Watkins K.L."/>
            <person name="Mulligan S."/>
            <person name="Benton J."/>
            <person name="Radune D."/>
            <person name="Fisher D.J."/>
            <person name="Atkins H.S."/>
            <person name="Hiscox T."/>
            <person name="Jost B.H."/>
            <person name="Billington S.J."/>
            <person name="Songer J.G."/>
            <person name="McClane B.A."/>
            <person name="Titball R.W."/>
            <person name="Rood J.I."/>
            <person name="Melville S.B."/>
            <person name="Paulsen I.T."/>
        </authorList>
    </citation>
    <scope>NUCLEOTIDE SEQUENCE [LARGE SCALE GENOMIC DNA]</scope>
    <source>
        <strain>ATCC 13124 / DSM 756 / JCM 1290 / NCIMB 6125 / NCTC 8237 / S 107 / Type A</strain>
    </source>
</reference>
<name>RECO_CLOP1</name>
<sequence>MLWIFTEKMGKITAIAKGAKKSKSKLFSLTHPLCYGDYLLFKGKGLYRLSEGKIRTSFQTSLTDLEKLTYASYLCELIDISLQDEEENFNLYKEFITCLYLINTEAISYELLIRAFELKLLKYTGYGLRFDNCVFCKNKLSVSNYISLRYFGGVCDKCPKEHGLYINKATYNALRFLNNTSLDKVYRLTLTEEVKAELFKVTSFIISSVYSRKPKSLEMLKFIKE</sequence>
<protein>
    <recommendedName>
        <fullName evidence="1">DNA repair protein RecO</fullName>
    </recommendedName>
    <alternativeName>
        <fullName evidence="1">Recombination protein O</fullName>
    </alternativeName>
</protein>
<evidence type="ECO:0000255" key="1">
    <source>
        <dbReference type="HAMAP-Rule" id="MF_00201"/>
    </source>
</evidence>
<organism>
    <name type="scientific">Clostridium perfringens (strain ATCC 13124 / DSM 756 / JCM 1290 / NCIMB 6125 / NCTC 8237 / Type A)</name>
    <dbReference type="NCBI Taxonomy" id="195103"/>
    <lineage>
        <taxon>Bacteria</taxon>
        <taxon>Bacillati</taxon>
        <taxon>Bacillota</taxon>
        <taxon>Clostridia</taxon>
        <taxon>Eubacteriales</taxon>
        <taxon>Clostridiaceae</taxon>
        <taxon>Clostridium</taxon>
    </lineage>
</organism>
<dbReference type="EMBL" id="CP000246">
    <property type="protein sequence ID" value="ABG84090.1"/>
    <property type="molecule type" value="Genomic_DNA"/>
</dbReference>
<dbReference type="SMR" id="Q0TNU6"/>
<dbReference type="STRING" id="195103.CPF_2271"/>
<dbReference type="PaxDb" id="195103-CPF_2271"/>
<dbReference type="KEGG" id="cpf:CPF_2271"/>
<dbReference type="eggNOG" id="COG1381">
    <property type="taxonomic scope" value="Bacteria"/>
</dbReference>
<dbReference type="HOGENOM" id="CLU_066632_3_1_9"/>
<dbReference type="Proteomes" id="UP000001823">
    <property type="component" value="Chromosome"/>
</dbReference>
<dbReference type="GO" id="GO:0043590">
    <property type="term" value="C:bacterial nucleoid"/>
    <property type="evidence" value="ECO:0007669"/>
    <property type="project" value="TreeGrafter"/>
</dbReference>
<dbReference type="GO" id="GO:0006310">
    <property type="term" value="P:DNA recombination"/>
    <property type="evidence" value="ECO:0007669"/>
    <property type="project" value="UniProtKB-UniRule"/>
</dbReference>
<dbReference type="GO" id="GO:0006302">
    <property type="term" value="P:double-strand break repair"/>
    <property type="evidence" value="ECO:0007669"/>
    <property type="project" value="TreeGrafter"/>
</dbReference>
<dbReference type="Gene3D" id="2.40.50.140">
    <property type="entry name" value="Nucleic acid-binding proteins"/>
    <property type="match status" value="1"/>
</dbReference>
<dbReference type="Gene3D" id="1.20.1440.120">
    <property type="entry name" value="Recombination protein O, C-terminal domain"/>
    <property type="match status" value="1"/>
</dbReference>
<dbReference type="HAMAP" id="MF_00201">
    <property type="entry name" value="RecO"/>
    <property type="match status" value="1"/>
</dbReference>
<dbReference type="InterPro" id="IPR037278">
    <property type="entry name" value="ARFGAP/RecO"/>
</dbReference>
<dbReference type="InterPro" id="IPR022572">
    <property type="entry name" value="DNA_rep/recomb_RecO_N"/>
</dbReference>
<dbReference type="InterPro" id="IPR012340">
    <property type="entry name" value="NA-bd_OB-fold"/>
</dbReference>
<dbReference type="InterPro" id="IPR003717">
    <property type="entry name" value="RecO"/>
</dbReference>
<dbReference type="InterPro" id="IPR042242">
    <property type="entry name" value="RecO_C"/>
</dbReference>
<dbReference type="NCBIfam" id="TIGR00613">
    <property type="entry name" value="reco"/>
    <property type="match status" value="1"/>
</dbReference>
<dbReference type="PANTHER" id="PTHR33991">
    <property type="entry name" value="DNA REPAIR PROTEIN RECO"/>
    <property type="match status" value="1"/>
</dbReference>
<dbReference type="PANTHER" id="PTHR33991:SF1">
    <property type="entry name" value="DNA REPAIR PROTEIN RECO"/>
    <property type="match status" value="1"/>
</dbReference>
<dbReference type="Pfam" id="PF02565">
    <property type="entry name" value="RecO_C"/>
    <property type="match status" value="1"/>
</dbReference>
<dbReference type="Pfam" id="PF11967">
    <property type="entry name" value="RecO_N"/>
    <property type="match status" value="1"/>
</dbReference>
<dbReference type="SUPFAM" id="SSF57863">
    <property type="entry name" value="ArfGap/RecO-like zinc finger"/>
    <property type="match status" value="1"/>
</dbReference>
<dbReference type="SUPFAM" id="SSF50249">
    <property type="entry name" value="Nucleic acid-binding proteins"/>
    <property type="match status" value="1"/>
</dbReference>
<comment type="function">
    <text evidence="1">Involved in DNA repair and RecF pathway recombination.</text>
</comment>
<comment type="similarity">
    <text evidence="1">Belongs to the RecO family.</text>
</comment>
<feature type="chain" id="PRO_0000264812" description="DNA repair protein RecO">
    <location>
        <begin position="1"/>
        <end position="225"/>
    </location>
</feature>
<gene>
    <name evidence="1" type="primary">recO</name>
    <name type="ordered locus">CPF_2271</name>
</gene>